<accession>B8HQA4</accession>
<dbReference type="EC" id="6.1.1.16" evidence="1"/>
<dbReference type="EMBL" id="CP001344">
    <property type="protein sequence ID" value="ACL47501.1"/>
    <property type="molecule type" value="Genomic_DNA"/>
</dbReference>
<dbReference type="SMR" id="B8HQA4"/>
<dbReference type="STRING" id="395961.Cyan7425_5208"/>
<dbReference type="KEGG" id="cyn:Cyan7425_5208"/>
<dbReference type="eggNOG" id="COG0215">
    <property type="taxonomic scope" value="Bacteria"/>
</dbReference>
<dbReference type="HOGENOM" id="CLU_013528_0_1_3"/>
<dbReference type="OrthoDB" id="9815130at2"/>
<dbReference type="GO" id="GO:0005829">
    <property type="term" value="C:cytosol"/>
    <property type="evidence" value="ECO:0007669"/>
    <property type="project" value="TreeGrafter"/>
</dbReference>
<dbReference type="GO" id="GO:0005524">
    <property type="term" value="F:ATP binding"/>
    <property type="evidence" value="ECO:0007669"/>
    <property type="project" value="UniProtKB-UniRule"/>
</dbReference>
<dbReference type="GO" id="GO:0004817">
    <property type="term" value="F:cysteine-tRNA ligase activity"/>
    <property type="evidence" value="ECO:0007669"/>
    <property type="project" value="UniProtKB-UniRule"/>
</dbReference>
<dbReference type="GO" id="GO:0008270">
    <property type="term" value="F:zinc ion binding"/>
    <property type="evidence" value="ECO:0007669"/>
    <property type="project" value="UniProtKB-UniRule"/>
</dbReference>
<dbReference type="GO" id="GO:0006423">
    <property type="term" value="P:cysteinyl-tRNA aminoacylation"/>
    <property type="evidence" value="ECO:0007669"/>
    <property type="project" value="UniProtKB-UniRule"/>
</dbReference>
<dbReference type="CDD" id="cd00672">
    <property type="entry name" value="CysRS_core"/>
    <property type="match status" value="1"/>
</dbReference>
<dbReference type="FunFam" id="3.40.50.620:FF:000009">
    <property type="entry name" value="Cysteine--tRNA ligase"/>
    <property type="match status" value="1"/>
</dbReference>
<dbReference type="Gene3D" id="1.20.120.1910">
    <property type="entry name" value="Cysteine-tRNA ligase, C-terminal anti-codon recognition domain"/>
    <property type="match status" value="1"/>
</dbReference>
<dbReference type="Gene3D" id="3.40.50.620">
    <property type="entry name" value="HUPs"/>
    <property type="match status" value="1"/>
</dbReference>
<dbReference type="HAMAP" id="MF_00041">
    <property type="entry name" value="Cys_tRNA_synth"/>
    <property type="match status" value="1"/>
</dbReference>
<dbReference type="InterPro" id="IPR015803">
    <property type="entry name" value="Cys-tRNA-ligase"/>
</dbReference>
<dbReference type="InterPro" id="IPR015273">
    <property type="entry name" value="Cys-tRNA-synt_Ia_DALR"/>
</dbReference>
<dbReference type="InterPro" id="IPR024909">
    <property type="entry name" value="Cys-tRNA/MSH_ligase"/>
</dbReference>
<dbReference type="InterPro" id="IPR056411">
    <property type="entry name" value="CysS_C"/>
</dbReference>
<dbReference type="InterPro" id="IPR014729">
    <property type="entry name" value="Rossmann-like_a/b/a_fold"/>
</dbReference>
<dbReference type="InterPro" id="IPR032678">
    <property type="entry name" value="tRNA-synt_1_cat_dom"/>
</dbReference>
<dbReference type="InterPro" id="IPR009080">
    <property type="entry name" value="tRNAsynth_Ia_anticodon-bd"/>
</dbReference>
<dbReference type="NCBIfam" id="TIGR00435">
    <property type="entry name" value="cysS"/>
    <property type="match status" value="1"/>
</dbReference>
<dbReference type="PANTHER" id="PTHR10890:SF3">
    <property type="entry name" value="CYSTEINE--TRNA LIGASE, CYTOPLASMIC"/>
    <property type="match status" value="1"/>
</dbReference>
<dbReference type="PANTHER" id="PTHR10890">
    <property type="entry name" value="CYSTEINYL-TRNA SYNTHETASE"/>
    <property type="match status" value="1"/>
</dbReference>
<dbReference type="Pfam" id="PF23493">
    <property type="entry name" value="CysS_C"/>
    <property type="match status" value="1"/>
</dbReference>
<dbReference type="Pfam" id="PF09190">
    <property type="entry name" value="DALR_2"/>
    <property type="match status" value="1"/>
</dbReference>
<dbReference type="Pfam" id="PF01406">
    <property type="entry name" value="tRNA-synt_1e"/>
    <property type="match status" value="1"/>
</dbReference>
<dbReference type="PRINTS" id="PR00983">
    <property type="entry name" value="TRNASYNTHCYS"/>
</dbReference>
<dbReference type="SMART" id="SM00840">
    <property type="entry name" value="DALR_2"/>
    <property type="match status" value="1"/>
</dbReference>
<dbReference type="SUPFAM" id="SSF47323">
    <property type="entry name" value="Anticodon-binding domain of a subclass of class I aminoacyl-tRNA synthetases"/>
    <property type="match status" value="1"/>
</dbReference>
<dbReference type="SUPFAM" id="SSF52374">
    <property type="entry name" value="Nucleotidylyl transferase"/>
    <property type="match status" value="1"/>
</dbReference>
<protein>
    <recommendedName>
        <fullName evidence="1">Cysteine--tRNA ligase</fullName>
        <ecNumber evidence="1">6.1.1.16</ecNumber>
    </recommendedName>
    <alternativeName>
        <fullName evidence="1">Cysteinyl-tRNA synthetase</fullName>
        <shortName evidence="1">CysRS</shortName>
    </alternativeName>
</protein>
<gene>
    <name evidence="1" type="primary">cysS</name>
    <name type="ordered locus">Cyan7425_5208</name>
</gene>
<organism>
    <name type="scientific">Cyanothece sp. (strain PCC 7425 / ATCC 29141)</name>
    <dbReference type="NCBI Taxonomy" id="395961"/>
    <lineage>
        <taxon>Bacteria</taxon>
        <taxon>Bacillati</taxon>
        <taxon>Cyanobacteriota</taxon>
        <taxon>Cyanophyceae</taxon>
        <taxon>Gomontiellales</taxon>
        <taxon>Cyanothecaceae</taxon>
        <taxon>Cyanothece</taxon>
    </lineage>
</organism>
<sequence>MPLSLYNTLTRHQEPFEPLEPGHVKMYCCGVTVYDYCHLGHARSYIVWDVVRRYLQWSGYQVRYVQNFTDIDDKILNRARQENSTMQAVSDRFIQAYHEDMQRLNILLADVYPKATDVIPEIIQLIQTLVDQGYAYAVDGDVYYAVDRFPDYGKLSGRQLEQMQAGASGRVDDTEPKKRHPLDFALWKAAKSEELSVYQPWDSPWGKGRPGWHIECSAMVRKELGHTIDIHCGGMDLIFPHHENEIAQSEAATRADLAHYWLHNGFVNIQGEKMSKSLGNFKTIRAFLNSGVDPMMLRLFVLQAHYRKPIDFSDETITAAQHSWQTLQEGLRFGYDYGQQLRWEDYQDSSFGDPACMRIPDSGAEIERFRAAMDDDLNTASAIAVLFELAKELRREGNLISHAGQPQLDPQELRSIWQTLVCLAQVLGLEVSPETEVTADDGLSEAEIEDLIQQRQAARKAKNYAEGDRIRNELKTKGITLIDQKDGSTKWIRD</sequence>
<evidence type="ECO:0000255" key="1">
    <source>
        <dbReference type="HAMAP-Rule" id="MF_00041"/>
    </source>
</evidence>
<comment type="catalytic activity">
    <reaction evidence="1">
        <text>tRNA(Cys) + L-cysteine + ATP = L-cysteinyl-tRNA(Cys) + AMP + diphosphate</text>
        <dbReference type="Rhea" id="RHEA:17773"/>
        <dbReference type="Rhea" id="RHEA-COMP:9661"/>
        <dbReference type="Rhea" id="RHEA-COMP:9679"/>
        <dbReference type="ChEBI" id="CHEBI:30616"/>
        <dbReference type="ChEBI" id="CHEBI:33019"/>
        <dbReference type="ChEBI" id="CHEBI:35235"/>
        <dbReference type="ChEBI" id="CHEBI:78442"/>
        <dbReference type="ChEBI" id="CHEBI:78517"/>
        <dbReference type="ChEBI" id="CHEBI:456215"/>
        <dbReference type="EC" id="6.1.1.16"/>
    </reaction>
</comment>
<comment type="cofactor">
    <cofactor evidence="1">
        <name>Zn(2+)</name>
        <dbReference type="ChEBI" id="CHEBI:29105"/>
    </cofactor>
    <text evidence="1">Binds 1 zinc ion per subunit.</text>
</comment>
<comment type="subunit">
    <text evidence="1">Monomer.</text>
</comment>
<comment type="subcellular location">
    <subcellularLocation>
        <location evidence="1">Cytoplasm</location>
    </subcellularLocation>
</comment>
<comment type="similarity">
    <text evidence="1">Belongs to the class-I aminoacyl-tRNA synthetase family.</text>
</comment>
<keyword id="KW-0030">Aminoacyl-tRNA synthetase</keyword>
<keyword id="KW-0067">ATP-binding</keyword>
<keyword id="KW-0963">Cytoplasm</keyword>
<keyword id="KW-0436">Ligase</keyword>
<keyword id="KW-0479">Metal-binding</keyword>
<keyword id="KW-0547">Nucleotide-binding</keyword>
<keyword id="KW-0648">Protein biosynthesis</keyword>
<keyword id="KW-0862">Zinc</keyword>
<feature type="chain" id="PRO_1000199054" description="Cysteine--tRNA ligase">
    <location>
        <begin position="1"/>
        <end position="494"/>
    </location>
</feature>
<feature type="short sequence motif" description="'HIGH' region">
    <location>
        <begin position="31"/>
        <end position="41"/>
    </location>
</feature>
<feature type="short sequence motif" description="'KMSKS' region">
    <location>
        <begin position="273"/>
        <end position="277"/>
    </location>
</feature>
<feature type="binding site" evidence="1">
    <location>
        <position position="29"/>
    </location>
    <ligand>
        <name>Zn(2+)</name>
        <dbReference type="ChEBI" id="CHEBI:29105"/>
    </ligand>
</feature>
<feature type="binding site" evidence="1">
    <location>
        <position position="216"/>
    </location>
    <ligand>
        <name>Zn(2+)</name>
        <dbReference type="ChEBI" id="CHEBI:29105"/>
    </ligand>
</feature>
<feature type="binding site" evidence="1">
    <location>
        <position position="241"/>
    </location>
    <ligand>
        <name>Zn(2+)</name>
        <dbReference type="ChEBI" id="CHEBI:29105"/>
    </ligand>
</feature>
<feature type="binding site" evidence="1">
    <location>
        <position position="245"/>
    </location>
    <ligand>
        <name>Zn(2+)</name>
        <dbReference type="ChEBI" id="CHEBI:29105"/>
    </ligand>
</feature>
<feature type="binding site" evidence="1">
    <location>
        <position position="276"/>
    </location>
    <ligand>
        <name>ATP</name>
        <dbReference type="ChEBI" id="CHEBI:30616"/>
    </ligand>
</feature>
<reference key="1">
    <citation type="journal article" date="2011" name="MBio">
        <title>Novel metabolic attributes of the genus Cyanothece, comprising a group of unicellular nitrogen-fixing Cyanobacteria.</title>
        <authorList>
            <person name="Bandyopadhyay A."/>
            <person name="Elvitigala T."/>
            <person name="Welsh E."/>
            <person name="Stockel J."/>
            <person name="Liberton M."/>
            <person name="Min H."/>
            <person name="Sherman L.A."/>
            <person name="Pakrasi H.B."/>
        </authorList>
    </citation>
    <scope>NUCLEOTIDE SEQUENCE [LARGE SCALE GENOMIC DNA]</scope>
    <source>
        <strain>PCC 7425 / ATCC 29141</strain>
    </source>
</reference>
<proteinExistence type="inferred from homology"/>
<name>SYC_CYAP4</name>